<accession>O89098</accession>
<dbReference type="EMBL" id="AF031826">
    <property type="protein sequence ID" value="AAC40140.1"/>
    <property type="molecule type" value="Genomic_DNA"/>
</dbReference>
<dbReference type="EMBL" id="AF031825">
    <property type="protein sequence ID" value="AAC40139.1"/>
    <property type="molecule type" value="mRNA"/>
</dbReference>
<dbReference type="CCDS" id="CCDS16857.2"/>
<dbReference type="RefSeq" id="NP_034107.2">
    <property type="nucleotide sequence ID" value="NM_009977.3"/>
</dbReference>
<dbReference type="SMR" id="O89098"/>
<dbReference type="FunCoup" id="O89098">
    <property type="interactions" value="257"/>
</dbReference>
<dbReference type="IntAct" id="O89098">
    <property type="interactions" value="1"/>
</dbReference>
<dbReference type="MINT" id="O89098"/>
<dbReference type="STRING" id="10090.ENSMUSP00000086606"/>
<dbReference type="MEROPS" id="I25.007"/>
<dbReference type="GlyCosmos" id="O89098">
    <property type="glycosylation" value="1 site, No reported glycans"/>
</dbReference>
<dbReference type="GlyGen" id="O89098">
    <property type="glycosylation" value="1 site"/>
</dbReference>
<dbReference type="PhosphoSitePlus" id="O89098"/>
<dbReference type="PaxDb" id="10090-ENSMUSP00000086606"/>
<dbReference type="ProteomicsDB" id="279258"/>
<dbReference type="Antibodypedia" id="24951">
    <property type="antibodies" value="174 antibodies from 33 providers"/>
</dbReference>
<dbReference type="DNASU" id="13011"/>
<dbReference type="Ensembl" id="ENSMUST00000089200.3">
    <property type="protein sequence ID" value="ENSMUSP00000086606.3"/>
    <property type="gene ID" value="ENSMUSG00000068129.6"/>
</dbReference>
<dbReference type="GeneID" id="13011"/>
<dbReference type="KEGG" id="mmu:13011"/>
<dbReference type="UCSC" id="uc008muc.2">
    <property type="organism name" value="mouse"/>
</dbReference>
<dbReference type="AGR" id="MGI:1298217"/>
<dbReference type="CTD" id="8530"/>
<dbReference type="MGI" id="MGI:1298217">
    <property type="gene designation" value="Cst7"/>
</dbReference>
<dbReference type="VEuPathDB" id="HostDB:ENSMUSG00000068129"/>
<dbReference type="eggNOG" id="ENOG502S5CP">
    <property type="taxonomic scope" value="Eukaryota"/>
</dbReference>
<dbReference type="GeneTree" id="ENSGT00940000160277"/>
<dbReference type="HOGENOM" id="CLU_118168_1_0_1"/>
<dbReference type="InParanoid" id="O89098"/>
<dbReference type="OMA" id="WLQHFEV"/>
<dbReference type="OrthoDB" id="9929365at2759"/>
<dbReference type="PhylomeDB" id="O89098"/>
<dbReference type="BioGRID-ORCS" id="13011">
    <property type="hits" value="2 hits in 76 CRISPR screens"/>
</dbReference>
<dbReference type="ChiTaRS" id="Cst7">
    <property type="organism name" value="mouse"/>
</dbReference>
<dbReference type="PRO" id="PR:O89098"/>
<dbReference type="Proteomes" id="UP000000589">
    <property type="component" value="Chromosome 2"/>
</dbReference>
<dbReference type="RNAct" id="O89098">
    <property type="molecule type" value="protein"/>
</dbReference>
<dbReference type="Bgee" id="ENSMUSG00000068129">
    <property type="expression patterns" value="Expressed in peripheral lymph node and 52 other cell types or tissues"/>
</dbReference>
<dbReference type="GO" id="GO:0005737">
    <property type="term" value="C:cytoplasm"/>
    <property type="evidence" value="ECO:0000314"/>
    <property type="project" value="MGI"/>
</dbReference>
<dbReference type="GO" id="GO:0031410">
    <property type="term" value="C:cytoplasmic vesicle"/>
    <property type="evidence" value="ECO:0000315"/>
    <property type="project" value="ARUK-UCL"/>
</dbReference>
<dbReference type="GO" id="GO:0005783">
    <property type="term" value="C:endoplasmic reticulum"/>
    <property type="evidence" value="ECO:0000315"/>
    <property type="project" value="ARUK-UCL"/>
</dbReference>
<dbReference type="GO" id="GO:0005615">
    <property type="term" value="C:extracellular space"/>
    <property type="evidence" value="ECO:0000314"/>
    <property type="project" value="MGI"/>
</dbReference>
<dbReference type="GO" id="GO:0005794">
    <property type="term" value="C:Golgi apparatus"/>
    <property type="evidence" value="ECO:0000314"/>
    <property type="project" value="ARUK-UCL"/>
</dbReference>
<dbReference type="GO" id="GO:0005770">
    <property type="term" value="C:late endosome"/>
    <property type="evidence" value="ECO:0000315"/>
    <property type="project" value="ARUK-UCL"/>
</dbReference>
<dbReference type="GO" id="GO:0005764">
    <property type="term" value="C:lysosome"/>
    <property type="evidence" value="ECO:0000315"/>
    <property type="project" value="ARUK-UCL"/>
</dbReference>
<dbReference type="GO" id="GO:0005771">
    <property type="term" value="C:multivesicular body"/>
    <property type="evidence" value="ECO:0007669"/>
    <property type="project" value="Ensembl"/>
</dbReference>
<dbReference type="GO" id="GO:0004869">
    <property type="term" value="F:cysteine-type endopeptidase inhibitor activity"/>
    <property type="evidence" value="ECO:0000315"/>
    <property type="project" value="MGI"/>
</dbReference>
<dbReference type="GO" id="GO:0030414">
    <property type="term" value="F:peptidase inhibitor activity"/>
    <property type="evidence" value="ECO:0000314"/>
    <property type="project" value="ARUK-UCL"/>
</dbReference>
<dbReference type="GO" id="GO:0002020">
    <property type="term" value="F:protease binding"/>
    <property type="evidence" value="ECO:0007669"/>
    <property type="project" value="Ensembl"/>
</dbReference>
<dbReference type="GO" id="GO:0042803">
    <property type="term" value="F:protein homodimerization activity"/>
    <property type="evidence" value="ECO:0007669"/>
    <property type="project" value="Ensembl"/>
</dbReference>
<dbReference type="GO" id="GO:0006955">
    <property type="term" value="P:immune response"/>
    <property type="evidence" value="ECO:0007669"/>
    <property type="project" value="InterPro"/>
</dbReference>
<dbReference type="GO" id="GO:1905146">
    <property type="term" value="P:lysosomal protein catabolic process"/>
    <property type="evidence" value="ECO:0007669"/>
    <property type="project" value="Ensembl"/>
</dbReference>
<dbReference type="GO" id="GO:1903979">
    <property type="term" value="P:negative regulation of microglial cell activation"/>
    <property type="evidence" value="ECO:0000315"/>
    <property type="project" value="MGI"/>
</dbReference>
<dbReference type="GO" id="GO:0031643">
    <property type="term" value="P:positive regulation of myelination"/>
    <property type="evidence" value="ECO:0000315"/>
    <property type="project" value="MGI"/>
</dbReference>
<dbReference type="GO" id="GO:0002577">
    <property type="term" value="P:regulation of antigen processing and presentation"/>
    <property type="evidence" value="ECO:0007669"/>
    <property type="project" value="Ensembl"/>
</dbReference>
<dbReference type="CDD" id="cd00042">
    <property type="entry name" value="CY"/>
    <property type="match status" value="1"/>
</dbReference>
<dbReference type="FunFam" id="3.10.450.10:FF:000004">
    <property type="entry name" value="Cystatin C"/>
    <property type="match status" value="1"/>
</dbReference>
<dbReference type="Gene3D" id="3.10.450.10">
    <property type="match status" value="1"/>
</dbReference>
<dbReference type="InterPro" id="IPR042886">
    <property type="entry name" value="Cystatin-F"/>
</dbReference>
<dbReference type="InterPro" id="IPR000010">
    <property type="entry name" value="Cystatin_dom"/>
</dbReference>
<dbReference type="InterPro" id="IPR046350">
    <property type="entry name" value="Cystatin_sf"/>
</dbReference>
<dbReference type="PANTHER" id="PTHR47141">
    <property type="entry name" value="CYSTATIN-F"/>
    <property type="match status" value="1"/>
</dbReference>
<dbReference type="PANTHER" id="PTHR47141:SF1">
    <property type="entry name" value="CYSTATIN-F"/>
    <property type="match status" value="1"/>
</dbReference>
<dbReference type="Pfam" id="PF00031">
    <property type="entry name" value="Cystatin"/>
    <property type="match status" value="1"/>
</dbReference>
<dbReference type="SMART" id="SM00043">
    <property type="entry name" value="CY"/>
    <property type="match status" value="1"/>
</dbReference>
<dbReference type="SUPFAM" id="SSF54403">
    <property type="entry name" value="Cystatin/monellin"/>
    <property type="match status" value="1"/>
</dbReference>
<keyword id="KW-1015">Disulfide bond</keyword>
<keyword id="KW-0325">Glycoprotein</keyword>
<keyword id="KW-0646">Protease inhibitor</keyword>
<keyword id="KW-1185">Reference proteome</keyword>
<keyword id="KW-0964">Secreted</keyword>
<keyword id="KW-0732">Signal</keyword>
<keyword id="KW-0789">Thiol protease inhibitor</keyword>
<evidence type="ECO:0000250" key="1"/>
<evidence type="ECO:0000255" key="2"/>
<evidence type="ECO:0000305" key="3"/>
<name>CYTF_MOUSE</name>
<protein>
    <recommendedName>
        <fullName>Cystatin-F</fullName>
    </recommendedName>
    <alternativeName>
        <fullName>Cystatin-7</fullName>
    </alternativeName>
    <alternativeName>
        <fullName>Cystatin-like metastasis-associated protein</fullName>
        <shortName>CMAP</shortName>
    </alternativeName>
    <alternativeName>
        <fullName>Leukocystatin</fullName>
    </alternativeName>
</protein>
<sequence length="144" mass="16380">MWLAILLALCCLTSDTHGARPPDFCSKDLISSVKPGFPKTIETNNPGVLKAARHSVEKFNNCTNDIFLFKESHVSKALVQVVKGLKYMLEVKIGRTTCRKTMHHQLDNCDFQTNPALKRTLYCYSEVWVIPWLHSFEVPVLLCQ</sequence>
<gene>
    <name type="primary">Cst7</name>
</gene>
<comment type="function">
    <text>Inhibits papain and cathepsin L but with affinities lower than other cystatins. May play a role in immune regulation through inhibition of a unique target in the hematopoietic system.</text>
</comment>
<comment type="subcellular location">
    <subcellularLocation>
        <location evidence="3">Secreted</location>
    </subcellularLocation>
</comment>
<comment type="similarity">
    <text evidence="3">Belongs to the cystatin family.</text>
</comment>
<feature type="signal peptide" evidence="2">
    <location>
        <begin position="1"/>
        <end position="18"/>
    </location>
</feature>
<feature type="chain" id="PRO_0000006647" description="Cystatin-F">
    <location>
        <begin position="19"/>
        <end position="144"/>
    </location>
</feature>
<feature type="short sequence motif" description="Secondary area of contact">
    <location>
        <begin position="80"/>
        <end position="84"/>
    </location>
</feature>
<feature type="site" description="Reactive site">
    <location>
        <position position="36"/>
    </location>
</feature>
<feature type="glycosylation site" description="N-linked (GlcNAc...) asparagine" evidence="2">
    <location>
        <position position="61"/>
    </location>
</feature>
<feature type="disulfide bond" evidence="1">
    <location>
        <begin position="98"/>
        <end position="109"/>
    </location>
</feature>
<feature type="disulfide bond" evidence="1">
    <location>
        <begin position="123"/>
        <end position="143"/>
    </location>
</feature>
<organism>
    <name type="scientific">Mus musculus</name>
    <name type="common">Mouse</name>
    <dbReference type="NCBI Taxonomy" id="10090"/>
    <lineage>
        <taxon>Eukaryota</taxon>
        <taxon>Metazoa</taxon>
        <taxon>Chordata</taxon>
        <taxon>Craniata</taxon>
        <taxon>Vertebrata</taxon>
        <taxon>Euteleostomi</taxon>
        <taxon>Mammalia</taxon>
        <taxon>Eutheria</taxon>
        <taxon>Euarchontoglires</taxon>
        <taxon>Glires</taxon>
        <taxon>Rodentia</taxon>
        <taxon>Myomorpha</taxon>
        <taxon>Muroidea</taxon>
        <taxon>Muridae</taxon>
        <taxon>Murinae</taxon>
        <taxon>Mus</taxon>
        <taxon>Mus</taxon>
    </lineage>
</organism>
<proteinExistence type="evidence at transcript level"/>
<reference key="1">
    <citation type="journal article" date="1998" name="J. Biol. Chem.">
        <title>Leukocystatin, a new class II cystatin expressed selectively by hematopoietic cells.</title>
        <authorList>
            <person name="Halfon S."/>
            <person name="Ford J."/>
            <person name="Foster J."/>
            <person name="Dowling L."/>
            <person name="Lucian L."/>
            <person name="Sterling M."/>
            <person name="Xu Y."/>
            <person name="Weiss M."/>
            <person name="Ikeda M."/>
            <person name="Liggett D."/>
            <person name="Helms A."/>
            <person name="Caux C."/>
            <person name="Lebecque S."/>
            <person name="Hannum C."/>
            <person name="Menon S."/>
            <person name="McClanahan T."/>
            <person name="Gorman D."/>
            <person name="Zurawski G."/>
        </authorList>
    </citation>
    <scope>NUCLEOTIDE SEQUENCE [GENOMIC DNA / MRNA]</scope>
</reference>